<reference key="1">
    <citation type="journal article" date="2004" name="Proc. Natl. Acad. Sci. U.S.A.">
        <title>Complete genomes of two clinical Staphylococcus aureus strains: evidence for the rapid evolution of virulence and drug resistance.</title>
        <authorList>
            <person name="Holden M.T.G."/>
            <person name="Feil E.J."/>
            <person name="Lindsay J.A."/>
            <person name="Peacock S.J."/>
            <person name="Day N.P.J."/>
            <person name="Enright M.C."/>
            <person name="Foster T.J."/>
            <person name="Moore C.E."/>
            <person name="Hurst L."/>
            <person name="Atkin R."/>
            <person name="Barron A."/>
            <person name="Bason N."/>
            <person name="Bentley S.D."/>
            <person name="Chillingworth C."/>
            <person name="Chillingworth T."/>
            <person name="Churcher C."/>
            <person name="Clark L."/>
            <person name="Corton C."/>
            <person name="Cronin A."/>
            <person name="Doggett J."/>
            <person name="Dowd L."/>
            <person name="Feltwell T."/>
            <person name="Hance Z."/>
            <person name="Harris B."/>
            <person name="Hauser H."/>
            <person name="Holroyd S."/>
            <person name="Jagels K."/>
            <person name="James K.D."/>
            <person name="Lennard N."/>
            <person name="Line A."/>
            <person name="Mayes R."/>
            <person name="Moule S."/>
            <person name="Mungall K."/>
            <person name="Ormond D."/>
            <person name="Quail M.A."/>
            <person name="Rabbinowitsch E."/>
            <person name="Rutherford K.M."/>
            <person name="Sanders M."/>
            <person name="Sharp S."/>
            <person name="Simmonds M."/>
            <person name="Stevens K."/>
            <person name="Whitehead S."/>
            <person name="Barrell B.G."/>
            <person name="Spratt B.G."/>
            <person name="Parkhill J."/>
        </authorList>
    </citation>
    <scope>NUCLEOTIDE SEQUENCE [LARGE SCALE GENOMIC DNA]</scope>
    <source>
        <strain>MRSA252</strain>
    </source>
</reference>
<sequence>MDVILEQLETHTQNKPNDIALHIDDETITYSQLNARITSAVESLQKYSLNPVVAINMKSPVQSIICYLALHRLHKVPMMMEGKWQSTIHRQLIEKYGIKDVIGDTCLMQNIDSPMFIDSTQLQHYPNLLHIGFTSGTTGLPKAYYRDEDSWLASFEVNEMLMLKNENAIAAPGPLSHSLTLYALLFALSSGRTFIGQTTFHPERLLNQCRKISSYKVAMFLVPTMIKSLLLVYNNEHTIQSFFSSGDKLYSSIFKKIKNQANDINLIEFFGTSETSFISYNLNQQAPVESVGVLFPNVELKTTNHDHNGIGTICVKSNMMFSGYVSEQCINNDEWFVTNDNGYVKEQYLYLTGRQHDMLIIGGQNIYPAHVERLLTQSSSIDEAIIIGIPNERFGQIGVLLYSGDVTLTHKNVKQFLNKKVKRYEIPSMIHHVEKMYYTASGKIAREKMMSMYLRGEL</sequence>
<organism>
    <name type="scientific">Staphylococcus aureus (strain MRSA252)</name>
    <dbReference type="NCBI Taxonomy" id="282458"/>
    <lineage>
        <taxon>Bacteria</taxon>
        <taxon>Bacillati</taxon>
        <taxon>Bacillota</taxon>
        <taxon>Bacilli</taxon>
        <taxon>Bacillales</taxon>
        <taxon>Staphylococcaceae</taxon>
        <taxon>Staphylococcus</taxon>
    </lineage>
</organism>
<name>VRAA_STAAR</name>
<proteinExistence type="inferred from homology"/>
<accession>Q6GJ94</accession>
<evidence type="ECO:0000305" key="1"/>
<protein>
    <recommendedName>
        <fullName>Putative long chain fatty acid-CoA ligase VraA</fullName>
        <ecNumber>6.2.1.-</ecNumber>
    </recommendedName>
    <alternativeName>
        <fullName>Acyl-CoA synthetase</fullName>
    </alternativeName>
</protein>
<comment type="similarity">
    <text evidence="1">Belongs to the ATP-dependent AMP-binding enzyme family.</text>
</comment>
<dbReference type="EC" id="6.2.1.-"/>
<dbReference type="EMBL" id="BX571856">
    <property type="protein sequence ID" value="CAG39600.1"/>
    <property type="molecule type" value="Genomic_DNA"/>
</dbReference>
<dbReference type="RefSeq" id="WP_000382590.1">
    <property type="nucleotide sequence ID" value="NC_002952.2"/>
</dbReference>
<dbReference type="SMR" id="Q6GJ94"/>
<dbReference type="KEGG" id="sar:SAR0580"/>
<dbReference type="HOGENOM" id="CLU_000022_59_0_9"/>
<dbReference type="Proteomes" id="UP000000596">
    <property type="component" value="Chromosome"/>
</dbReference>
<dbReference type="GO" id="GO:0031956">
    <property type="term" value="F:medium-chain fatty acid-CoA ligase activity"/>
    <property type="evidence" value="ECO:0007669"/>
    <property type="project" value="TreeGrafter"/>
</dbReference>
<dbReference type="GO" id="GO:0006631">
    <property type="term" value="P:fatty acid metabolic process"/>
    <property type="evidence" value="ECO:0007669"/>
    <property type="project" value="UniProtKB-KW"/>
</dbReference>
<dbReference type="CDD" id="cd17633">
    <property type="entry name" value="AFD_YhfT-like"/>
    <property type="match status" value="1"/>
</dbReference>
<dbReference type="Gene3D" id="3.30.300.30">
    <property type="match status" value="1"/>
</dbReference>
<dbReference type="Gene3D" id="3.40.50.12780">
    <property type="entry name" value="N-terminal domain of ligase-like"/>
    <property type="match status" value="1"/>
</dbReference>
<dbReference type="InterPro" id="IPR025110">
    <property type="entry name" value="AMP-bd_C"/>
</dbReference>
<dbReference type="InterPro" id="IPR045851">
    <property type="entry name" value="AMP-bd_C_sf"/>
</dbReference>
<dbReference type="InterPro" id="IPR020845">
    <property type="entry name" value="AMP-binding_CS"/>
</dbReference>
<dbReference type="InterPro" id="IPR000873">
    <property type="entry name" value="AMP-dep_synth/lig_dom"/>
</dbReference>
<dbReference type="InterPro" id="IPR042099">
    <property type="entry name" value="ANL_N_sf"/>
</dbReference>
<dbReference type="PANTHER" id="PTHR43201">
    <property type="entry name" value="ACYL-COA SYNTHETASE"/>
    <property type="match status" value="1"/>
</dbReference>
<dbReference type="PANTHER" id="PTHR43201:SF5">
    <property type="entry name" value="MEDIUM-CHAIN ACYL-COA LIGASE ACSF2, MITOCHONDRIAL"/>
    <property type="match status" value="1"/>
</dbReference>
<dbReference type="Pfam" id="PF00501">
    <property type="entry name" value="AMP-binding"/>
    <property type="match status" value="1"/>
</dbReference>
<dbReference type="Pfam" id="PF13193">
    <property type="entry name" value="AMP-binding_C"/>
    <property type="match status" value="1"/>
</dbReference>
<dbReference type="SUPFAM" id="SSF56801">
    <property type="entry name" value="Acetyl-CoA synthetase-like"/>
    <property type="match status" value="1"/>
</dbReference>
<dbReference type="PROSITE" id="PS00455">
    <property type="entry name" value="AMP_BINDING"/>
    <property type="match status" value="1"/>
</dbReference>
<feature type="chain" id="PRO_0000193194" description="Putative long chain fatty acid-CoA ligase VraA">
    <location>
        <begin position="1"/>
        <end position="458"/>
    </location>
</feature>
<keyword id="KW-0276">Fatty acid metabolism</keyword>
<keyword id="KW-0436">Ligase</keyword>
<keyword id="KW-0443">Lipid metabolism</keyword>
<gene>
    <name type="primary">vraA</name>
    <name type="ordered locus">SAR0580</name>
</gene>